<keyword id="KW-0413">Isomerase</keyword>
<name>RPIA_PSEF5</name>
<gene>
    <name evidence="1" type="primary">rpiA</name>
    <name type="ordered locus">PFL_5906</name>
</gene>
<dbReference type="EC" id="5.3.1.6" evidence="1"/>
<dbReference type="EMBL" id="CP000076">
    <property type="protein sequence ID" value="AAY95096.1"/>
    <property type="molecule type" value="Genomic_DNA"/>
</dbReference>
<dbReference type="RefSeq" id="WP_011064079.1">
    <property type="nucleotide sequence ID" value="NC_004129.6"/>
</dbReference>
<dbReference type="SMR" id="Q4K469"/>
<dbReference type="STRING" id="220664.PFL_5906"/>
<dbReference type="KEGG" id="pfl:PFL_5906"/>
<dbReference type="PATRIC" id="fig|220664.5.peg.6022"/>
<dbReference type="eggNOG" id="COG0120">
    <property type="taxonomic scope" value="Bacteria"/>
</dbReference>
<dbReference type="HOGENOM" id="CLU_056590_1_1_6"/>
<dbReference type="UniPathway" id="UPA00115">
    <property type="reaction ID" value="UER00412"/>
</dbReference>
<dbReference type="Proteomes" id="UP000008540">
    <property type="component" value="Chromosome"/>
</dbReference>
<dbReference type="GO" id="GO:0005829">
    <property type="term" value="C:cytosol"/>
    <property type="evidence" value="ECO:0007669"/>
    <property type="project" value="TreeGrafter"/>
</dbReference>
<dbReference type="GO" id="GO:0004751">
    <property type="term" value="F:ribose-5-phosphate isomerase activity"/>
    <property type="evidence" value="ECO:0007669"/>
    <property type="project" value="UniProtKB-UniRule"/>
</dbReference>
<dbReference type="GO" id="GO:0006014">
    <property type="term" value="P:D-ribose metabolic process"/>
    <property type="evidence" value="ECO:0007669"/>
    <property type="project" value="TreeGrafter"/>
</dbReference>
<dbReference type="GO" id="GO:0009052">
    <property type="term" value="P:pentose-phosphate shunt, non-oxidative branch"/>
    <property type="evidence" value="ECO:0007669"/>
    <property type="project" value="UniProtKB-UniRule"/>
</dbReference>
<dbReference type="CDD" id="cd01398">
    <property type="entry name" value="RPI_A"/>
    <property type="match status" value="1"/>
</dbReference>
<dbReference type="FunFam" id="3.30.70.260:FF:000004">
    <property type="entry name" value="Ribose-5-phosphate isomerase A"/>
    <property type="match status" value="1"/>
</dbReference>
<dbReference type="FunFam" id="3.40.50.1360:FF:000001">
    <property type="entry name" value="Ribose-5-phosphate isomerase A"/>
    <property type="match status" value="1"/>
</dbReference>
<dbReference type="Gene3D" id="3.30.70.260">
    <property type="match status" value="1"/>
</dbReference>
<dbReference type="Gene3D" id="3.40.50.1360">
    <property type="match status" value="1"/>
</dbReference>
<dbReference type="HAMAP" id="MF_00170">
    <property type="entry name" value="Rib_5P_isom_A"/>
    <property type="match status" value="1"/>
</dbReference>
<dbReference type="InterPro" id="IPR037171">
    <property type="entry name" value="NagB/RpiA_transferase-like"/>
</dbReference>
<dbReference type="InterPro" id="IPR020672">
    <property type="entry name" value="Ribose5P_isomerase_typA_subgr"/>
</dbReference>
<dbReference type="InterPro" id="IPR004788">
    <property type="entry name" value="Ribose5P_isomerase_type_A"/>
</dbReference>
<dbReference type="NCBIfam" id="NF001924">
    <property type="entry name" value="PRK00702.1"/>
    <property type="match status" value="1"/>
</dbReference>
<dbReference type="NCBIfam" id="TIGR00021">
    <property type="entry name" value="rpiA"/>
    <property type="match status" value="1"/>
</dbReference>
<dbReference type="PANTHER" id="PTHR11934">
    <property type="entry name" value="RIBOSE-5-PHOSPHATE ISOMERASE"/>
    <property type="match status" value="1"/>
</dbReference>
<dbReference type="PANTHER" id="PTHR11934:SF0">
    <property type="entry name" value="RIBOSE-5-PHOSPHATE ISOMERASE"/>
    <property type="match status" value="1"/>
</dbReference>
<dbReference type="Pfam" id="PF06026">
    <property type="entry name" value="Rib_5-P_isom_A"/>
    <property type="match status" value="1"/>
</dbReference>
<dbReference type="SUPFAM" id="SSF75445">
    <property type="entry name" value="D-ribose-5-phosphate isomerase (RpiA), lid domain"/>
    <property type="match status" value="1"/>
</dbReference>
<dbReference type="SUPFAM" id="SSF100950">
    <property type="entry name" value="NagB/RpiA/CoA transferase-like"/>
    <property type="match status" value="1"/>
</dbReference>
<accession>Q4K469</accession>
<reference key="1">
    <citation type="journal article" date="2005" name="Nat. Biotechnol.">
        <title>Complete genome sequence of the plant commensal Pseudomonas fluorescens Pf-5.</title>
        <authorList>
            <person name="Paulsen I.T."/>
            <person name="Press C.M."/>
            <person name="Ravel J."/>
            <person name="Kobayashi D.Y."/>
            <person name="Myers G.S.A."/>
            <person name="Mavrodi D.V."/>
            <person name="DeBoy R.T."/>
            <person name="Seshadri R."/>
            <person name="Ren Q."/>
            <person name="Madupu R."/>
            <person name="Dodson R.J."/>
            <person name="Durkin A.S."/>
            <person name="Brinkac L.M."/>
            <person name="Daugherty S.C."/>
            <person name="Sullivan S.A."/>
            <person name="Rosovitz M.J."/>
            <person name="Gwinn M.L."/>
            <person name="Zhou L."/>
            <person name="Schneider D.J."/>
            <person name="Cartinhour S.W."/>
            <person name="Nelson W.C."/>
            <person name="Weidman J."/>
            <person name="Watkins K."/>
            <person name="Tran K."/>
            <person name="Khouri H."/>
            <person name="Pierson E.A."/>
            <person name="Pierson L.S. III"/>
            <person name="Thomashow L.S."/>
            <person name="Loper J.E."/>
        </authorList>
    </citation>
    <scope>NUCLEOTIDE SEQUENCE [LARGE SCALE GENOMIC DNA]</scope>
    <source>
        <strain>ATCC BAA-477 / NRRL B-23932 / Pf-5</strain>
    </source>
</reference>
<feature type="chain" id="PRO_1000016965" description="Ribose-5-phosphate isomerase A">
    <location>
        <begin position="1"/>
        <end position="223"/>
    </location>
</feature>
<feature type="active site" description="Proton acceptor" evidence="1">
    <location>
        <position position="107"/>
    </location>
</feature>
<feature type="binding site" evidence="1">
    <location>
        <begin position="32"/>
        <end position="35"/>
    </location>
    <ligand>
        <name>substrate</name>
    </ligand>
</feature>
<feature type="binding site" evidence="1">
    <location>
        <begin position="85"/>
        <end position="88"/>
    </location>
    <ligand>
        <name>substrate</name>
    </ligand>
</feature>
<feature type="binding site" evidence="1">
    <location>
        <begin position="98"/>
        <end position="101"/>
    </location>
    <ligand>
        <name>substrate</name>
    </ligand>
</feature>
<feature type="binding site" evidence="1">
    <location>
        <position position="125"/>
    </location>
    <ligand>
        <name>substrate</name>
    </ligand>
</feature>
<sequence length="223" mass="23346">MTQDQLKQAVAQAAVDLILPKLDDKSIVGVGTGSTANCFIDALALHKGTFDGAVASSEATAARLKGHGIPVYELNTVSDLEFYIDGADESDEHLNLIKGGGAALTREKIVAAVAKTFICIADASKLVPVLGNFPLPVEVIPMARSHVARELVKLGGDPVYREGVITDNGNIILDVHNMQITNPVELESQINAIVGVVTNGLFAARPADVLLLGTAEGVKTLKA</sequence>
<evidence type="ECO:0000255" key="1">
    <source>
        <dbReference type="HAMAP-Rule" id="MF_00170"/>
    </source>
</evidence>
<protein>
    <recommendedName>
        <fullName evidence="1">Ribose-5-phosphate isomerase A</fullName>
        <ecNumber evidence="1">5.3.1.6</ecNumber>
    </recommendedName>
    <alternativeName>
        <fullName evidence="1">Phosphoriboisomerase A</fullName>
        <shortName evidence="1">PRI</shortName>
    </alternativeName>
</protein>
<proteinExistence type="inferred from homology"/>
<comment type="function">
    <text evidence="1">Catalyzes the reversible conversion of ribose-5-phosphate to ribulose 5-phosphate.</text>
</comment>
<comment type="catalytic activity">
    <reaction evidence="1">
        <text>aldehydo-D-ribose 5-phosphate = D-ribulose 5-phosphate</text>
        <dbReference type="Rhea" id="RHEA:14657"/>
        <dbReference type="ChEBI" id="CHEBI:58121"/>
        <dbReference type="ChEBI" id="CHEBI:58273"/>
        <dbReference type="EC" id="5.3.1.6"/>
    </reaction>
</comment>
<comment type="pathway">
    <text evidence="1">Carbohydrate degradation; pentose phosphate pathway; D-ribose 5-phosphate from D-ribulose 5-phosphate (non-oxidative stage): step 1/1.</text>
</comment>
<comment type="subunit">
    <text evidence="1">Homodimer.</text>
</comment>
<comment type="similarity">
    <text evidence="1">Belongs to the ribose 5-phosphate isomerase family.</text>
</comment>
<organism>
    <name type="scientific">Pseudomonas fluorescens (strain ATCC BAA-477 / NRRL B-23932 / Pf-5)</name>
    <dbReference type="NCBI Taxonomy" id="220664"/>
    <lineage>
        <taxon>Bacteria</taxon>
        <taxon>Pseudomonadati</taxon>
        <taxon>Pseudomonadota</taxon>
        <taxon>Gammaproteobacteria</taxon>
        <taxon>Pseudomonadales</taxon>
        <taxon>Pseudomonadaceae</taxon>
        <taxon>Pseudomonas</taxon>
    </lineage>
</organism>